<dbReference type="EC" id="6.2.1.53" evidence="4"/>
<dbReference type="EMBL" id="KV878977">
    <property type="protein sequence ID" value="OJJ99913.1"/>
    <property type="molecule type" value="Genomic_DNA"/>
</dbReference>
<dbReference type="RefSeq" id="XP_020056253.1">
    <property type="nucleotide sequence ID" value="XM_020199636.1"/>
</dbReference>
<dbReference type="SMR" id="A0A1L9WUW3"/>
<dbReference type="STRING" id="690307.A0A1L9WUW3"/>
<dbReference type="GeneID" id="30973450"/>
<dbReference type="VEuPathDB" id="FungiDB:ASPACDRAFT_29371"/>
<dbReference type="OMA" id="QIENLAW"/>
<dbReference type="OrthoDB" id="416786at2759"/>
<dbReference type="Proteomes" id="UP000184546">
    <property type="component" value="Unassembled WGS sequence"/>
</dbReference>
<dbReference type="GO" id="GO:0005737">
    <property type="term" value="C:cytoplasm"/>
    <property type="evidence" value="ECO:0007669"/>
    <property type="project" value="TreeGrafter"/>
</dbReference>
<dbReference type="GO" id="GO:0016874">
    <property type="term" value="F:ligase activity"/>
    <property type="evidence" value="ECO:0007669"/>
    <property type="project" value="UniProtKB-KW"/>
</dbReference>
<dbReference type="GO" id="GO:0031177">
    <property type="term" value="F:phosphopantetheine binding"/>
    <property type="evidence" value="ECO:0007669"/>
    <property type="project" value="InterPro"/>
</dbReference>
<dbReference type="GO" id="GO:0043041">
    <property type="term" value="P:amino acid activation for nonribosomal peptide biosynthetic process"/>
    <property type="evidence" value="ECO:0007669"/>
    <property type="project" value="TreeGrafter"/>
</dbReference>
<dbReference type="GO" id="GO:0044550">
    <property type="term" value="P:secondary metabolite biosynthetic process"/>
    <property type="evidence" value="ECO:0007669"/>
    <property type="project" value="TreeGrafter"/>
</dbReference>
<dbReference type="CDD" id="cd05918">
    <property type="entry name" value="A_NRPS_SidN3_like"/>
    <property type="match status" value="1"/>
</dbReference>
<dbReference type="FunFam" id="1.10.1200.10:FF:000005">
    <property type="entry name" value="Nonribosomal peptide synthetase 1"/>
    <property type="match status" value="1"/>
</dbReference>
<dbReference type="Gene3D" id="3.30.300.30">
    <property type="match status" value="1"/>
</dbReference>
<dbReference type="Gene3D" id="1.10.1200.10">
    <property type="entry name" value="ACP-like"/>
    <property type="match status" value="1"/>
</dbReference>
<dbReference type="Gene3D" id="3.30.559.10">
    <property type="entry name" value="Chloramphenicol acetyltransferase-like domain"/>
    <property type="match status" value="1"/>
</dbReference>
<dbReference type="Gene3D" id="3.40.50.12780">
    <property type="entry name" value="N-terminal domain of ligase-like"/>
    <property type="match status" value="1"/>
</dbReference>
<dbReference type="Gene3D" id="3.30.559.30">
    <property type="entry name" value="Nonribosomal peptide synthetase, condensation domain"/>
    <property type="match status" value="1"/>
</dbReference>
<dbReference type="InterPro" id="IPR010071">
    <property type="entry name" value="AA_adenyl_dom"/>
</dbReference>
<dbReference type="InterPro" id="IPR036736">
    <property type="entry name" value="ACP-like_sf"/>
</dbReference>
<dbReference type="InterPro" id="IPR045851">
    <property type="entry name" value="AMP-bd_C_sf"/>
</dbReference>
<dbReference type="InterPro" id="IPR020845">
    <property type="entry name" value="AMP-binding_CS"/>
</dbReference>
<dbReference type="InterPro" id="IPR000873">
    <property type="entry name" value="AMP-dep_synth/lig_dom"/>
</dbReference>
<dbReference type="InterPro" id="IPR042099">
    <property type="entry name" value="ANL_N_sf"/>
</dbReference>
<dbReference type="InterPro" id="IPR023213">
    <property type="entry name" value="CAT-like_dom_sf"/>
</dbReference>
<dbReference type="InterPro" id="IPR020806">
    <property type="entry name" value="PKS_PP-bd"/>
</dbReference>
<dbReference type="InterPro" id="IPR009081">
    <property type="entry name" value="PP-bd_ACP"/>
</dbReference>
<dbReference type="InterPro" id="IPR006162">
    <property type="entry name" value="Ppantetheine_attach_site"/>
</dbReference>
<dbReference type="NCBIfam" id="TIGR01733">
    <property type="entry name" value="AA-adenyl-dom"/>
    <property type="match status" value="1"/>
</dbReference>
<dbReference type="PANTHER" id="PTHR45527:SF1">
    <property type="entry name" value="FATTY ACID SYNTHASE"/>
    <property type="match status" value="1"/>
</dbReference>
<dbReference type="PANTHER" id="PTHR45527">
    <property type="entry name" value="NONRIBOSOMAL PEPTIDE SYNTHETASE"/>
    <property type="match status" value="1"/>
</dbReference>
<dbReference type="Pfam" id="PF00501">
    <property type="entry name" value="AMP-binding"/>
    <property type="match status" value="1"/>
</dbReference>
<dbReference type="Pfam" id="PF00550">
    <property type="entry name" value="PP-binding"/>
    <property type="match status" value="1"/>
</dbReference>
<dbReference type="SMART" id="SM00823">
    <property type="entry name" value="PKS_PP"/>
    <property type="match status" value="1"/>
</dbReference>
<dbReference type="SUPFAM" id="SSF56801">
    <property type="entry name" value="Acetyl-CoA synthetase-like"/>
    <property type="match status" value="1"/>
</dbReference>
<dbReference type="SUPFAM" id="SSF47336">
    <property type="entry name" value="ACP-like"/>
    <property type="match status" value="1"/>
</dbReference>
<dbReference type="SUPFAM" id="SSF52777">
    <property type="entry name" value="CoA-dependent acyltransferases"/>
    <property type="match status" value="2"/>
</dbReference>
<dbReference type="PROSITE" id="PS00455">
    <property type="entry name" value="AMP_BINDING"/>
    <property type="match status" value="1"/>
</dbReference>
<dbReference type="PROSITE" id="PS50075">
    <property type="entry name" value="CARRIER"/>
    <property type="match status" value="1"/>
</dbReference>
<dbReference type="PROSITE" id="PS00012">
    <property type="entry name" value="PHOSPHOPANTETHEINE"/>
    <property type="match status" value="1"/>
</dbReference>
<comment type="function">
    <text evidence="4">Nonribosomal peptide synthetase; part of the gene cluster that mediates the biosynthesis of aculenes, a unique type of norsesquiterpenes that contain a nordaucane skeleton linked to an L-proline moiety and are of mixed biosynthetic origin (PubMed:31618514). The pathway begins with the synthesis of dauca-4,7-diene by the terpene cyclase aneC using farnesyl pyrophosphate (FPP) as substrate (PubMed:31618514). The cytochrome P450 monooxygenase aneF then performs the initial oxidation at C-12 of dauca-4,7-diene to yield asperaculane D (PubMed:31618514). Asperaculane D is substrate of the cytochrome P450 monooxygenase aneD for C-10 hydroxylation to yield asperaculane E (PubMed:31618514). The cytochrome P450 monooxygenase aneG then converts asperaculane E into aculene D via C-2 oxidation (PubMed:31618514). The monomodular nonribosomal peptide synthase aneB adenylates L-proline and the thiohydrolase aneE transfers this activated L-proline derivative to aculenes D and C to produce respectively aculenes B and A (PubMed:31618514). The dioxygenase aneA converts aculene D into aculene C, and aculene B into aculene A by introducing the 5,6-alkene moiety (PubMed:31618514). Asperculanes A, B, C and F, as well as 14-prolyl asperculane C, might be shunt products of the pathway (PubMed:31618514).</text>
</comment>
<comment type="catalytic activity">
    <reaction evidence="4">
        <text>holo-[peptidyl-carrier protein] + L-proline + ATP = L-prolyl-[peptidyl-carrier protein] + AMP + diphosphate</text>
        <dbReference type="Rhea" id="RHEA:11656"/>
        <dbReference type="Rhea" id="RHEA-COMP:11480"/>
        <dbReference type="Rhea" id="RHEA-COMP:14109"/>
        <dbReference type="ChEBI" id="CHEBI:30616"/>
        <dbReference type="ChEBI" id="CHEBI:33019"/>
        <dbReference type="ChEBI" id="CHEBI:60039"/>
        <dbReference type="ChEBI" id="CHEBI:64479"/>
        <dbReference type="ChEBI" id="CHEBI:138622"/>
        <dbReference type="ChEBI" id="CHEBI:456215"/>
        <dbReference type="EC" id="6.2.1.53"/>
    </reaction>
    <physiologicalReaction direction="left-to-right" evidence="4">
        <dbReference type="Rhea" id="RHEA:11657"/>
    </physiologicalReaction>
</comment>
<comment type="pathway">
    <text evidence="4">Secondary metabolite biosynthesis.</text>
</comment>
<comment type="domain">
    <text evidence="6 7">NRP synthetases are composed of discrete domains (adenylation (A), thiolation (T) or peptidyl carrier protein (PCP) and condensation (C) domains) which when grouped together are referred to as a single module. Each module is responsible for the recognition (via the A domain) and incorporation of a single amino acid into the growing peptide product (Probable). AneB has a monomodular A-T-C architecture (Probable).</text>
</comment>
<comment type="disruption phenotype">
    <text evidence="4">Abolishes the production of aculenes A and B and accumulates aculenes C and D.</text>
</comment>
<comment type="similarity">
    <text evidence="6">Belongs to the NRP synthetase family.</text>
</comment>
<sequence length="1078" mass="119429">MTLDDNPVPPTLPYTLHGVFQQNVLDRPDASAVCAWDGDLTYRELDEKSSTLAHILRHRGVQDGALVALCFDHSLWTAVAMMAVSKAGGVWFFLEPKHPVNRLRQMCRSVQARMVLCSRSQASVAAELSDDQMEAPLSIEEAVLREEDPGPMDLEVVSPERPAYVAFTSGSTGSPKGAVMTHQAAVTGVLHNAKPMQLDRTARILQFASFAFDISFLEHFWALLLGGCLCIPAPLDRQNNTIHAVQSLQVNWMFLTPTVARLLEPPQLPSLRTLVLGGEPVTQADLDMWLPYVHLAGLYGPAECAVGIAVQPDYSRVESANNVGPPFSVACWIVSEQDPTQLAPRGAVGELVVEGPSISEGYINAPEQTTRAYLTNPTWLPAARHSTKKLYRTGDLARVLDDGSLLFHGRKDTQVKINGQRIELGEIEYHTRAVLGKEHLRSPPVVAEAMEVRGRALTVIAFYQVEGVCQDLDHDGQDLFLPPDDGFVGRKQSYQSQLRDHLPEYMIPTSFIPVRGLPLTMSGKTDRKTLREKFAQLPSDRIKAYFVDGDGGSRSTEGMPTTPLERQMQELWAATLKLELEEVGRNDPWMSLGGESLAAMRLVARARKEGIAVTVPDIFRHKTIATLCQHVSVRPGPETIESFPPFSLVQCQQGSTGIEELRHAAAQQCGLTPEAIEDLYPFTAMQEAVVIPPATIGVNYTLRLDVKLPAELDLEQLMRAWDMVVAANSVLRMRVVRLPADESETMVLAVTRPEIPMEPLFAERFAPGVDLWGLGKPLVRVGVAPGRLVMLIQHALYDGHSLGLIFRDLEQAYRGQPVAAVSYSPFVHWSTEWQDGSNKQQYWREKFAGFDGRVCPPRVADAGIGCMESQHFWGSLNFRPDGFTVTSKIRVALAVVLSWHFDTCDIVLGGIYARRGAPIPGIMESPVPASAILPDRIRLDPTQSLRANVDQDQENILTMMPYEGIRPSQVLDLSEAARAASQFQTILAVQQDNSSVYPEMFRDHEMGYYGPVTAHNLMMQCFLSPDRASARVSLRLSERTMQETTAWDRFLAHFEAVVDAIQEKPEIPVDRLRQHLGA</sequence>
<keyword id="KW-0436">Ligase</keyword>
<keyword id="KW-0596">Phosphopantetheine</keyword>
<keyword id="KW-0597">Phosphoprotein</keyword>
<keyword id="KW-1185">Reference proteome</keyword>
<reference key="1">
    <citation type="journal article" date="2017" name="Genome Biol.">
        <title>Comparative genomics reveals high biological diversity and specific adaptations in the industrially and medically important fungal genus Aspergillus.</title>
        <authorList>
            <person name="de Vries R.P."/>
            <person name="Riley R."/>
            <person name="Wiebenga A."/>
            <person name="Aguilar-Osorio G."/>
            <person name="Amillis S."/>
            <person name="Uchima C.A."/>
            <person name="Anderluh G."/>
            <person name="Asadollahi M."/>
            <person name="Askin M."/>
            <person name="Barry K."/>
            <person name="Battaglia E."/>
            <person name="Bayram O."/>
            <person name="Benocci T."/>
            <person name="Braus-Stromeyer S.A."/>
            <person name="Caldana C."/>
            <person name="Canovas D."/>
            <person name="Cerqueira G.C."/>
            <person name="Chen F."/>
            <person name="Chen W."/>
            <person name="Choi C."/>
            <person name="Clum A."/>
            <person name="Dos Santos R.A."/>
            <person name="Damasio A.R."/>
            <person name="Diallinas G."/>
            <person name="Emri T."/>
            <person name="Fekete E."/>
            <person name="Flipphi M."/>
            <person name="Freyberg S."/>
            <person name="Gallo A."/>
            <person name="Gournas C."/>
            <person name="Habgood R."/>
            <person name="Hainaut M."/>
            <person name="Harispe M.L."/>
            <person name="Henrissat B."/>
            <person name="Hilden K.S."/>
            <person name="Hope R."/>
            <person name="Hossain A."/>
            <person name="Karabika E."/>
            <person name="Karaffa L."/>
            <person name="Karanyi Z."/>
            <person name="Krasevec N."/>
            <person name="Kuo A."/>
            <person name="Kusch H."/>
            <person name="LaButti K."/>
            <person name="Lagendijk E.L."/>
            <person name="Lapidus A."/>
            <person name="Levasseur A."/>
            <person name="Lindquist E."/>
            <person name="Lipzen A."/>
            <person name="Logrieco A.F."/>
            <person name="MacCabe A."/>
            <person name="Maekelae M.R."/>
            <person name="Malavazi I."/>
            <person name="Melin P."/>
            <person name="Meyer V."/>
            <person name="Mielnichuk N."/>
            <person name="Miskei M."/>
            <person name="Molnar A.P."/>
            <person name="Mule G."/>
            <person name="Ngan C.Y."/>
            <person name="Orejas M."/>
            <person name="Orosz E."/>
            <person name="Ouedraogo J.P."/>
            <person name="Overkamp K.M."/>
            <person name="Park H.-S."/>
            <person name="Perrone G."/>
            <person name="Piumi F."/>
            <person name="Punt P.J."/>
            <person name="Ram A.F."/>
            <person name="Ramon A."/>
            <person name="Rauscher S."/>
            <person name="Record E."/>
            <person name="Riano-Pachon D.M."/>
            <person name="Robert V."/>
            <person name="Roehrig J."/>
            <person name="Ruller R."/>
            <person name="Salamov A."/>
            <person name="Salih N.S."/>
            <person name="Samson R.A."/>
            <person name="Sandor E."/>
            <person name="Sanguinetti M."/>
            <person name="Schuetze T."/>
            <person name="Sepcic K."/>
            <person name="Shelest E."/>
            <person name="Sherlock G."/>
            <person name="Sophianopoulou V."/>
            <person name="Squina F.M."/>
            <person name="Sun H."/>
            <person name="Susca A."/>
            <person name="Todd R.B."/>
            <person name="Tsang A."/>
            <person name="Unkles S.E."/>
            <person name="van de Wiele N."/>
            <person name="van Rossen-Uffink D."/>
            <person name="Oliveira J.V."/>
            <person name="Vesth T.C."/>
            <person name="Visser J."/>
            <person name="Yu J.-H."/>
            <person name="Zhou M."/>
            <person name="Andersen M.R."/>
            <person name="Archer D.B."/>
            <person name="Baker S.E."/>
            <person name="Benoit I."/>
            <person name="Brakhage A.A."/>
            <person name="Braus G.H."/>
            <person name="Fischer R."/>
            <person name="Frisvad J.C."/>
            <person name="Goldman G.H."/>
            <person name="Houbraken J."/>
            <person name="Oakley B."/>
            <person name="Pocsi I."/>
            <person name="Scazzocchio C."/>
            <person name="Seiboth B."/>
            <person name="vanKuyk P.A."/>
            <person name="Wortman J."/>
            <person name="Dyer P.S."/>
            <person name="Grigoriev I.V."/>
        </authorList>
    </citation>
    <scope>NUCLEOTIDE SEQUENCE [LARGE SCALE GENOMIC DNA]</scope>
    <source>
        <strain>ATCC 16872 / CBS 172.66 / WB 5094</strain>
    </source>
</reference>
<reference key="2">
    <citation type="journal article" date="2019" name="Angew. Chem. Int. Ed.">
        <title>The biosynthesis of norsesquiterpene aculenes requires three cytochrome P450 enzymes to catalyze a stepwise demethylation process.</title>
        <authorList>
            <person name="Lee C.F."/>
            <person name="Chen L.X."/>
            <person name="Chiang C.Y."/>
            <person name="Lai C.Y."/>
            <person name="Lin H.C."/>
        </authorList>
    </citation>
    <scope>FUNCTION</scope>
    <scope>DISRUPTION PHENOTYPE</scope>
    <scope>CATALYTIC ACTIVITY</scope>
    <scope>PATHWAY</scope>
</reference>
<accession>A0A1L9WUW3</accession>
<feature type="chain" id="PRO_0000449091" description="Nonribosomal peptide synthetase aneB">
    <location>
        <begin position="1"/>
        <end position="1078"/>
    </location>
</feature>
<feature type="domain" description="Carrier" evidence="3">
    <location>
        <begin position="559"/>
        <end position="635"/>
    </location>
</feature>
<feature type="region of interest" description="Adenylation" evidence="1 2">
    <location>
        <begin position="20"/>
        <end position="417"/>
    </location>
</feature>
<feature type="region of interest" description="Condensation" evidence="2">
    <location>
        <begin position="699"/>
        <end position="1013"/>
    </location>
</feature>
<feature type="modified residue" description="O-(pantetheine 4'-phosphoryl)serine" evidence="3">
    <location>
        <position position="596"/>
    </location>
</feature>
<gene>
    <name evidence="5" type="primary">aneB</name>
    <name type="ORF">ASPACDRAFT_29371</name>
</gene>
<proteinExistence type="evidence at protein level"/>
<evidence type="ECO:0000250" key="1">
    <source>
        <dbReference type="UniProtKB" id="Q5AUZ6"/>
    </source>
</evidence>
<evidence type="ECO:0000255" key="2"/>
<evidence type="ECO:0000255" key="3">
    <source>
        <dbReference type="PROSITE-ProRule" id="PRU00258"/>
    </source>
</evidence>
<evidence type="ECO:0000269" key="4">
    <source>
    </source>
</evidence>
<evidence type="ECO:0000303" key="5">
    <source>
    </source>
</evidence>
<evidence type="ECO:0000305" key="6"/>
<evidence type="ECO:0000305" key="7">
    <source>
    </source>
</evidence>
<name>ANEB_ASPA1</name>
<protein>
    <recommendedName>
        <fullName evidence="5">Nonribosomal peptide synthetase aneB</fullName>
        <ecNumber evidence="4">6.2.1.53</ecNumber>
    </recommendedName>
    <alternativeName>
        <fullName evidence="5">Aculenes biosynthesis cluster protein B</fullName>
    </alternativeName>
</protein>
<organism>
    <name type="scientific">Aspergillus aculeatus (strain ATCC 16872 / CBS 172.66 / WB 5094)</name>
    <dbReference type="NCBI Taxonomy" id="690307"/>
    <lineage>
        <taxon>Eukaryota</taxon>
        <taxon>Fungi</taxon>
        <taxon>Dikarya</taxon>
        <taxon>Ascomycota</taxon>
        <taxon>Pezizomycotina</taxon>
        <taxon>Eurotiomycetes</taxon>
        <taxon>Eurotiomycetidae</taxon>
        <taxon>Eurotiales</taxon>
        <taxon>Aspergillaceae</taxon>
        <taxon>Aspergillus</taxon>
        <taxon>Aspergillus subgen. Circumdati</taxon>
    </lineage>
</organism>